<comment type="function">
    <text evidence="1">Sequence-specific endonuclease that cleaves unmethylated GATC sequences. It is involved in DNA mismatch repair.</text>
</comment>
<comment type="subcellular location">
    <subcellularLocation>
        <location evidence="1">Cytoplasm</location>
    </subcellularLocation>
</comment>
<comment type="similarity">
    <text evidence="1">Belongs to the MutH family.</text>
</comment>
<name>MUTH_SALPK</name>
<sequence>MSALCPLPTPPASEALLLAQARQLSGYTLGELAAMAGITTPKDLKRDKGWIGVLLEIWLGASAGSKPEQDFAALGVELKTIPVDSLGRPLETTFVCVAPLTGNSGVTWETSHVRHKLKRVLWVPVEGNRSIPLAERRVGSPLLWSPSEEEDRQLRLDWEELMDMIVLGQVERITARHGEVLQLRPKAVNARALTEAIGARGEPILTLPRGFYLKKNFTQALLARHFLLQNP</sequence>
<reference key="1">
    <citation type="journal article" date="2009" name="BMC Genomics">
        <title>Pseudogene accumulation in the evolutionary histories of Salmonella enterica serovars Paratyphi A and Typhi.</title>
        <authorList>
            <person name="Holt K.E."/>
            <person name="Thomson N.R."/>
            <person name="Wain J."/>
            <person name="Langridge G.C."/>
            <person name="Hasan R."/>
            <person name="Bhutta Z.A."/>
            <person name="Quail M.A."/>
            <person name="Norbertczak H."/>
            <person name="Walker D."/>
            <person name="Simmonds M."/>
            <person name="White B."/>
            <person name="Bason N."/>
            <person name="Mungall K."/>
            <person name="Dougan G."/>
            <person name="Parkhill J."/>
        </authorList>
    </citation>
    <scope>NUCLEOTIDE SEQUENCE [LARGE SCALE GENOMIC DNA]</scope>
    <source>
        <strain>AKU_12601</strain>
    </source>
</reference>
<proteinExistence type="inferred from homology"/>
<accession>B5BFH1</accession>
<evidence type="ECO:0000255" key="1">
    <source>
        <dbReference type="HAMAP-Rule" id="MF_00759"/>
    </source>
</evidence>
<feature type="chain" id="PRO_1000133475" description="DNA mismatch repair protein MutH">
    <location>
        <begin position="1"/>
        <end position="231"/>
    </location>
</feature>
<keyword id="KW-0963">Cytoplasm</keyword>
<keyword id="KW-0227">DNA damage</keyword>
<keyword id="KW-0234">DNA repair</keyword>
<keyword id="KW-0255">Endonuclease</keyword>
<keyword id="KW-0378">Hydrolase</keyword>
<keyword id="KW-0540">Nuclease</keyword>
<protein>
    <recommendedName>
        <fullName evidence="1">DNA mismatch repair protein MutH</fullName>
    </recommendedName>
    <alternativeName>
        <fullName evidence="1">Methyl-directed mismatch repair protein</fullName>
    </alternativeName>
</protein>
<gene>
    <name evidence="1" type="primary">mutH</name>
    <name type="ordered locus">SSPA2675</name>
</gene>
<dbReference type="EMBL" id="FM200053">
    <property type="protein sequence ID" value="CAR60916.1"/>
    <property type="molecule type" value="Genomic_DNA"/>
</dbReference>
<dbReference type="RefSeq" id="WP_001274937.1">
    <property type="nucleotide sequence ID" value="NC_011147.1"/>
</dbReference>
<dbReference type="SMR" id="B5BFH1"/>
<dbReference type="KEGG" id="sek:SSPA2675"/>
<dbReference type="HOGENOM" id="CLU_086669_0_0_6"/>
<dbReference type="Proteomes" id="UP000001869">
    <property type="component" value="Chromosome"/>
</dbReference>
<dbReference type="GO" id="GO:0005737">
    <property type="term" value="C:cytoplasm"/>
    <property type="evidence" value="ECO:0007669"/>
    <property type="project" value="UniProtKB-SubCell"/>
</dbReference>
<dbReference type="GO" id="GO:0003677">
    <property type="term" value="F:DNA binding"/>
    <property type="evidence" value="ECO:0007669"/>
    <property type="project" value="InterPro"/>
</dbReference>
<dbReference type="GO" id="GO:0004519">
    <property type="term" value="F:endonuclease activity"/>
    <property type="evidence" value="ECO:0007669"/>
    <property type="project" value="UniProtKB-UniRule"/>
</dbReference>
<dbReference type="GO" id="GO:0006304">
    <property type="term" value="P:DNA modification"/>
    <property type="evidence" value="ECO:0007669"/>
    <property type="project" value="InterPro"/>
</dbReference>
<dbReference type="GO" id="GO:0006298">
    <property type="term" value="P:mismatch repair"/>
    <property type="evidence" value="ECO:0007669"/>
    <property type="project" value="UniProtKB-UniRule"/>
</dbReference>
<dbReference type="CDD" id="cd00583">
    <property type="entry name" value="MutH-like"/>
    <property type="match status" value="1"/>
</dbReference>
<dbReference type="FunFam" id="3.40.600.10:FF:000001">
    <property type="entry name" value="DNA mismatch repair protein MutH"/>
    <property type="match status" value="1"/>
</dbReference>
<dbReference type="Gene3D" id="3.40.600.10">
    <property type="entry name" value="DNA mismatch repair MutH/Restriction endonuclease, type II"/>
    <property type="match status" value="1"/>
</dbReference>
<dbReference type="HAMAP" id="MF_00759">
    <property type="entry name" value="MutH"/>
    <property type="match status" value="1"/>
</dbReference>
<dbReference type="InterPro" id="IPR004230">
    <property type="entry name" value="DNA_mismatch_repair_MutH"/>
</dbReference>
<dbReference type="InterPro" id="IPR011337">
    <property type="entry name" value="DNA_rep_MutH/RE_typeII_Sau3AI"/>
</dbReference>
<dbReference type="InterPro" id="IPR037057">
    <property type="entry name" value="DNA_rep_MutH/T2_RE_sf"/>
</dbReference>
<dbReference type="InterPro" id="IPR011335">
    <property type="entry name" value="Restrct_endonuc-II-like"/>
</dbReference>
<dbReference type="NCBIfam" id="TIGR02248">
    <property type="entry name" value="mutH_TIGR"/>
    <property type="match status" value="1"/>
</dbReference>
<dbReference type="NCBIfam" id="NF003458">
    <property type="entry name" value="PRK05070.1"/>
    <property type="match status" value="1"/>
</dbReference>
<dbReference type="Pfam" id="PF02976">
    <property type="entry name" value="MutH"/>
    <property type="match status" value="1"/>
</dbReference>
<dbReference type="SMART" id="SM00927">
    <property type="entry name" value="MutH"/>
    <property type="match status" value="1"/>
</dbReference>
<dbReference type="SUPFAM" id="SSF52980">
    <property type="entry name" value="Restriction endonuclease-like"/>
    <property type="match status" value="1"/>
</dbReference>
<organism>
    <name type="scientific">Salmonella paratyphi A (strain AKU_12601)</name>
    <dbReference type="NCBI Taxonomy" id="554290"/>
    <lineage>
        <taxon>Bacteria</taxon>
        <taxon>Pseudomonadati</taxon>
        <taxon>Pseudomonadota</taxon>
        <taxon>Gammaproteobacteria</taxon>
        <taxon>Enterobacterales</taxon>
        <taxon>Enterobacteriaceae</taxon>
        <taxon>Salmonella</taxon>
    </lineage>
</organism>